<sequence length="224" mass="25357">MLLQIDRVLTTEELNQLNTLLQAGVFEDGKWTAGIYAKTVKDNQQLVQEGEEYRVASEIVLSALSRNQLFQAYVQPKIIGPLLFSRYEVGMAYGTHTDNALMGSGDQLRRSDVSLTIFLNDPFAYEGGALVLDTSLGEQYFKLPAGSMIVYPSIFLHRVETVSKGVRLVAVAWVQSLIRDPLERELLFELDTVRRSLFEKQGKTVDFDLLCKVYSNLLRKWAEI</sequence>
<proteinExistence type="inferred from homology"/>
<gene>
    <name type="ordered locus">tll1907</name>
</gene>
<dbReference type="EC" id="1.14.11.-" evidence="1"/>
<dbReference type="EMBL" id="BA000039">
    <property type="protein sequence ID" value="BAC09459.1"/>
    <property type="status" value="ALT_INIT"/>
    <property type="molecule type" value="Genomic_DNA"/>
</dbReference>
<dbReference type="RefSeq" id="NP_682697.2">
    <property type="nucleotide sequence ID" value="NC_004113.1"/>
</dbReference>
<dbReference type="RefSeq" id="WP_011057744.1">
    <property type="nucleotide sequence ID" value="NC_004113.1"/>
</dbReference>
<dbReference type="SMR" id="Q8DHN8"/>
<dbReference type="STRING" id="197221.gene:10748513"/>
<dbReference type="EnsemblBacteria" id="BAC09459">
    <property type="protein sequence ID" value="BAC09459"/>
    <property type="gene ID" value="BAC09459"/>
</dbReference>
<dbReference type="KEGG" id="tel:tll1907"/>
<dbReference type="PATRIC" id="fig|197221.4.peg.1993"/>
<dbReference type="eggNOG" id="COG3128">
    <property type="taxonomic scope" value="Bacteria"/>
</dbReference>
<dbReference type="Proteomes" id="UP000000440">
    <property type="component" value="Chromosome"/>
</dbReference>
<dbReference type="GO" id="GO:0016706">
    <property type="term" value="F:2-oxoglutarate-dependent dioxygenase activity"/>
    <property type="evidence" value="ECO:0007669"/>
    <property type="project" value="UniProtKB-UniRule"/>
</dbReference>
<dbReference type="GO" id="GO:0005506">
    <property type="term" value="F:iron ion binding"/>
    <property type="evidence" value="ECO:0007669"/>
    <property type="project" value="UniProtKB-UniRule"/>
</dbReference>
<dbReference type="GO" id="GO:0031418">
    <property type="term" value="F:L-ascorbic acid binding"/>
    <property type="evidence" value="ECO:0007669"/>
    <property type="project" value="UniProtKB-KW"/>
</dbReference>
<dbReference type="GO" id="GO:0006974">
    <property type="term" value="P:DNA damage response"/>
    <property type="evidence" value="ECO:0007669"/>
    <property type="project" value="TreeGrafter"/>
</dbReference>
<dbReference type="GO" id="GO:0006879">
    <property type="term" value="P:intracellular iron ion homeostasis"/>
    <property type="evidence" value="ECO:0007669"/>
    <property type="project" value="TreeGrafter"/>
</dbReference>
<dbReference type="Gene3D" id="2.60.120.620">
    <property type="entry name" value="q2cbj1_9rhob like domain"/>
    <property type="match status" value="1"/>
</dbReference>
<dbReference type="Gene3D" id="4.10.860.20">
    <property type="entry name" value="Rabenosyn, Rab binding domain"/>
    <property type="match status" value="1"/>
</dbReference>
<dbReference type="HAMAP" id="MF_00657">
    <property type="entry name" value="Hydroxyl_YbiX"/>
    <property type="match status" value="1"/>
</dbReference>
<dbReference type="InterPro" id="IPR005123">
    <property type="entry name" value="Oxoglu/Fe-dep_dioxygenase_dom"/>
</dbReference>
<dbReference type="InterPro" id="IPR041097">
    <property type="entry name" value="PKHD_C"/>
</dbReference>
<dbReference type="InterPro" id="IPR023550">
    <property type="entry name" value="PKHD_hydroxylase"/>
</dbReference>
<dbReference type="InterPro" id="IPR006620">
    <property type="entry name" value="Pro_4_hyd_alph"/>
</dbReference>
<dbReference type="InterPro" id="IPR044862">
    <property type="entry name" value="Pro_4_hyd_alph_FE2OG_OXY"/>
</dbReference>
<dbReference type="NCBIfam" id="NF003974">
    <property type="entry name" value="PRK05467.1-3"/>
    <property type="match status" value="1"/>
</dbReference>
<dbReference type="NCBIfam" id="NF003975">
    <property type="entry name" value="PRK05467.1-4"/>
    <property type="match status" value="1"/>
</dbReference>
<dbReference type="PANTHER" id="PTHR41536">
    <property type="entry name" value="PKHD-TYPE HYDROXYLASE YBIX"/>
    <property type="match status" value="1"/>
</dbReference>
<dbReference type="PANTHER" id="PTHR41536:SF1">
    <property type="entry name" value="PKHD-TYPE HYDROXYLASE YBIX"/>
    <property type="match status" value="1"/>
</dbReference>
<dbReference type="Pfam" id="PF13640">
    <property type="entry name" value="2OG-FeII_Oxy_3"/>
    <property type="match status" value="1"/>
</dbReference>
<dbReference type="Pfam" id="PF18331">
    <property type="entry name" value="PKHD_C"/>
    <property type="match status" value="1"/>
</dbReference>
<dbReference type="SMART" id="SM00702">
    <property type="entry name" value="P4Hc"/>
    <property type="match status" value="1"/>
</dbReference>
<dbReference type="PROSITE" id="PS51471">
    <property type="entry name" value="FE2OG_OXY"/>
    <property type="match status" value="1"/>
</dbReference>
<keyword id="KW-0223">Dioxygenase</keyword>
<keyword id="KW-0408">Iron</keyword>
<keyword id="KW-0479">Metal-binding</keyword>
<keyword id="KW-0560">Oxidoreductase</keyword>
<keyword id="KW-1185">Reference proteome</keyword>
<keyword id="KW-0847">Vitamin C</keyword>
<evidence type="ECO:0000255" key="1">
    <source>
        <dbReference type="HAMAP-Rule" id="MF_00657"/>
    </source>
</evidence>
<evidence type="ECO:0000305" key="2"/>
<organism>
    <name type="scientific">Thermosynechococcus vestitus (strain NIES-2133 / IAM M-273 / BP-1)</name>
    <dbReference type="NCBI Taxonomy" id="197221"/>
    <lineage>
        <taxon>Bacteria</taxon>
        <taxon>Bacillati</taxon>
        <taxon>Cyanobacteriota</taxon>
        <taxon>Cyanophyceae</taxon>
        <taxon>Acaryochloridales</taxon>
        <taxon>Thermosynechococcaceae</taxon>
        <taxon>Thermosynechococcus</taxon>
    </lineage>
</organism>
<protein>
    <recommendedName>
        <fullName evidence="1">PKHD-type hydroxylase tll1907</fullName>
        <ecNumber evidence="1">1.14.11.-</ecNumber>
    </recommendedName>
</protein>
<name>Y1907_THEVB</name>
<comment type="cofactor">
    <cofactor evidence="1">
        <name>Fe(2+)</name>
        <dbReference type="ChEBI" id="CHEBI:29033"/>
    </cofactor>
    <text evidence="1">Binds 1 Fe(2+) ion per subunit.</text>
</comment>
<comment type="cofactor">
    <cofactor evidence="1">
        <name>L-ascorbate</name>
        <dbReference type="ChEBI" id="CHEBI:38290"/>
    </cofactor>
</comment>
<comment type="sequence caution" evidence="2">
    <conflict type="erroneous initiation">
        <sequence resource="EMBL-CDS" id="BAC09459"/>
    </conflict>
</comment>
<feature type="chain" id="PRO_0000206684" description="PKHD-type hydroxylase tll1907">
    <location>
        <begin position="1"/>
        <end position="224"/>
    </location>
</feature>
<feature type="domain" description="Fe2OG dioxygenase" evidence="1">
    <location>
        <begin position="77"/>
        <end position="176"/>
    </location>
</feature>
<feature type="binding site" evidence="1">
    <location>
        <position position="96"/>
    </location>
    <ligand>
        <name>Fe cation</name>
        <dbReference type="ChEBI" id="CHEBI:24875"/>
    </ligand>
</feature>
<feature type="binding site" evidence="1">
    <location>
        <position position="98"/>
    </location>
    <ligand>
        <name>Fe cation</name>
        <dbReference type="ChEBI" id="CHEBI:24875"/>
    </ligand>
</feature>
<feature type="binding site" evidence="1">
    <location>
        <position position="157"/>
    </location>
    <ligand>
        <name>Fe cation</name>
        <dbReference type="ChEBI" id="CHEBI:24875"/>
    </ligand>
</feature>
<feature type="binding site" evidence="1">
    <location>
        <position position="167"/>
    </location>
    <ligand>
        <name>2-oxoglutarate</name>
        <dbReference type="ChEBI" id="CHEBI:16810"/>
    </ligand>
</feature>
<accession>Q8DHN8</accession>
<reference key="1">
    <citation type="journal article" date="2002" name="DNA Res.">
        <title>Complete genome structure of the thermophilic cyanobacterium Thermosynechococcus elongatus BP-1.</title>
        <authorList>
            <person name="Nakamura Y."/>
            <person name="Kaneko T."/>
            <person name="Sato S."/>
            <person name="Ikeuchi M."/>
            <person name="Katoh H."/>
            <person name="Sasamoto S."/>
            <person name="Watanabe A."/>
            <person name="Iriguchi M."/>
            <person name="Kawashima K."/>
            <person name="Kimura T."/>
            <person name="Kishida Y."/>
            <person name="Kiyokawa C."/>
            <person name="Kohara M."/>
            <person name="Matsumoto M."/>
            <person name="Matsuno A."/>
            <person name="Nakazaki N."/>
            <person name="Shimpo S."/>
            <person name="Sugimoto M."/>
            <person name="Takeuchi C."/>
            <person name="Yamada M."/>
            <person name="Tabata S."/>
        </authorList>
    </citation>
    <scope>NUCLEOTIDE SEQUENCE [LARGE SCALE GENOMIC DNA]</scope>
    <source>
        <strain>NIES-2133 / IAM M-273 / BP-1</strain>
    </source>
</reference>